<protein>
    <recommendedName>
        <fullName evidence="1">ATP synthase subunit c</fullName>
    </recommendedName>
    <alternativeName>
        <fullName evidence="1">ATP synthase F(0) sector subunit c</fullName>
    </alternativeName>
    <alternativeName>
        <fullName evidence="1">F-type ATPase subunit c</fullName>
        <shortName evidence="1">F-ATPase subunit c</shortName>
    </alternativeName>
    <alternativeName>
        <fullName evidence="1">Lipid-binding protein</fullName>
    </alternativeName>
</protein>
<organism>
    <name type="scientific">Acidithiobacillus ferridurans</name>
    <dbReference type="NCBI Taxonomy" id="1232575"/>
    <lineage>
        <taxon>Bacteria</taxon>
        <taxon>Pseudomonadati</taxon>
        <taxon>Pseudomonadota</taxon>
        <taxon>Acidithiobacillia</taxon>
        <taxon>Acidithiobacillales</taxon>
        <taxon>Acidithiobacillaceae</taxon>
        <taxon>Acidithiobacillus</taxon>
    </lineage>
</organism>
<reference key="1">
    <citation type="journal article" date="1994" name="FEMS Microbiol. Lett.">
        <title>The F1 genes of the F1F0 ATP synthase from the acidophilic bacterium Thiobacillus ferrooxidans complement Escherichia coli F1 unc mutants.</title>
        <authorList>
            <person name="Brown L.D."/>
            <person name="Dennehy M.E."/>
            <person name="Rawlings D.E."/>
        </authorList>
    </citation>
    <scope>NUCLEOTIDE SEQUENCE [GENOMIC DNA]</scope>
    <source>
        <strain>ATCC 33020 / DSM 29468 / JCM 18981 / 11Fe</strain>
    </source>
</reference>
<accession>P41173</accession>
<dbReference type="EMBL" id="M81087">
    <property type="protein sequence ID" value="AAA53122.1"/>
    <property type="molecule type" value="Genomic_DNA"/>
</dbReference>
<dbReference type="RefSeq" id="WP_009561114.1">
    <property type="nucleotide sequence ID" value="NZ_PQJK01000014.1"/>
</dbReference>
<dbReference type="SMR" id="P41173"/>
<dbReference type="GeneID" id="65282192"/>
<dbReference type="GO" id="GO:0005886">
    <property type="term" value="C:plasma membrane"/>
    <property type="evidence" value="ECO:0007669"/>
    <property type="project" value="UniProtKB-SubCell"/>
</dbReference>
<dbReference type="GO" id="GO:0045259">
    <property type="term" value="C:proton-transporting ATP synthase complex"/>
    <property type="evidence" value="ECO:0007669"/>
    <property type="project" value="UniProtKB-KW"/>
</dbReference>
<dbReference type="GO" id="GO:0033177">
    <property type="term" value="C:proton-transporting two-sector ATPase complex, proton-transporting domain"/>
    <property type="evidence" value="ECO:0007669"/>
    <property type="project" value="InterPro"/>
</dbReference>
<dbReference type="GO" id="GO:0008289">
    <property type="term" value="F:lipid binding"/>
    <property type="evidence" value="ECO:0007669"/>
    <property type="project" value="UniProtKB-KW"/>
</dbReference>
<dbReference type="GO" id="GO:0046933">
    <property type="term" value="F:proton-transporting ATP synthase activity, rotational mechanism"/>
    <property type="evidence" value="ECO:0007669"/>
    <property type="project" value="UniProtKB-UniRule"/>
</dbReference>
<dbReference type="CDD" id="cd18185">
    <property type="entry name" value="ATP-synt_Fo_c_ATPE"/>
    <property type="match status" value="1"/>
</dbReference>
<dbReference type="FunFam" id="1.20.20.10:FF:000002">
    <property type="entry name" value="ATP synthase subunit c"/>
    <property type="match status" value="1"/>
</dbReference>
<dbReference type="Gene3D" id="1.20.20.10">
    <property type="entry name" value="F1F0 ATP synthase subunit C"/>
    <property type="match status" value="1"/>
</dbReference>
<dbReference type="HAMAP" id="MF_01396">
    <property type="entry name" value="ATP_synth_c_bact"/>
    <property type="match status" value="1"/>
</dbReference>
<dbReference type="InterPro" id="IPR005953">
    <property type="entry name" value="ATP_synth_csu_bac/chlpt"/>
</dbReference>
<dbReference type="InterPro" id="IPR000454">
    <property type="entry name" value="ATP_synth_F0_csu"/>
</dbReference>
<dbReference type="InterPro" id="IPR020537">
    <property type="entry name" value="ATP_synth_F0_csu_DDCD_BS"/>
</dbReference>
<dbReference type="InterPro" id="IPR038662">
    <property type="entry name" value="ATP_synth_F0_csu_sf"/>
</dbReference>
<dbReference type="InterPro" id="IPR002379">
    <property type="entry name" value="ATPase_proteolipid_c-like_dom"/>
</dbReference>
<dbReference type="InterPro" id="IPR035921">
    <property type="entry name" value="F/V-ATP_Csub_sf"/>
</dbReference>
<dbReference type="NCBIfam" id="TIGR01260">
    <property type="entry name" value="ATP_synt_c"/>
    <property type="match status" value="1"/>
</dbReference>
<dbReference type="NCBIfam" id="NF005363">
    <property type="entry name" value="PRK06876.1"/>
    <property type="match status" value="1"/>
</dbReference>
<dbReference type="Pfam" id="PF00137">
    <property type="entry name" value="ATP-synt_C"/>
    <property type="match status" value="1"/>
</dbReference>
<dbReference type="SUPFAM" id="SSF81333">
    <property type="entry name" value="F1F0 ATP synthase subunit C"/>
    <property type="match status" value="1"/>
</dbReference>
<dbReference type="PROSITE" id="PS00605">
    <property type="entry name" value="ATPASE_C"/>
    <property type="match status" value="1"/>
</dbReference>
<sequence length="84" mass="8990">MDAHTIIVAATAIAVGIIFGAAGLGSAIGWGLITSKTIEGITRQPEMRPQLLVNTFIFAGLMESFPFIILAFGFWFLFANPFLG</sequence>
<feature type="chain" id="PRO_0000112174" description="ATP synthase subunit c">
    <location>
        <begin position="1"/>
        <end position="84"/>
    </location>
</feature>
<feature type="transmembrane region" description="Helical" evidence="1">
    <location>
        <begin position="13"/>
        <end position="33"/>
    </location>
</feature>
<feature type="transmembrane region" description="Helical" evidence="1">
    <location>
        <begin position="56"/>
        <end position="76"/>
    </location>
</feature>
<feature type="site" description="Reversibly protonated during proton transport" evidence="1">
    <location>
        <position position="63"/>
    </location>
</feature>
<keyword id="KW-0066">ATP synthesis</keyword>
<keyword id="KW-0997">Cell inner membrane</keyword>
<keyword id="KW-1003">Cell membrane</keyword>
<keyword id="KW-0138">CF(0)</keyword>
<keyword id="KW-0375">Hydrogen ion transport</keyword>
<keyword id="KW-0406">Ion transport</keyword>
<keyword id="KW-0446">Lipid-binding</keyword>
<keyword id="KW-0472">Membrane</keyword>
<keyword id="KW-0812">Transmembrane</keyword>
<keyword id="KW-1133">Transmembrane helix</keyword>
<keyword id="KW-0813">Transport</keyword>
<comment type="function">
    <text evidence="1">F(1)F(0) ATP synthase produces ATP from ADP in the presence of a proton or sodium gradient. F-type ATPases consist of two structural domains, F(1) containing the extramembraneous catalytic core and F(0) containing the membrane proton channel, linked together by a central stalk and a peripheral stalk. During catalysis, ATP synthesis in the catalytic domain of F(1) is coupled via a rotary mechanism of the central stalk subunits to proton translocation.</text>
</comment>
<comment type="function">
    <text evidence="1">Key component of the F(0) channel; it plays a direct role in translocation across the membrane. A homomeric c-ring of between 10-14 subunits forms the central stalk rotor element with the F(1) delta and epsilon subunits.</text>
</comment>
<comment type="subunit">
    <text evidence="1">F-type ATPases have 2 components, F(1) - the catalytic core - and F(0) - the membrane proton channel. F(1) has five subunits: alpha(3), beta(3), gamma(1), delta(1), epsilon(1). F(0) has three main subunits: a(1), b(2) and c(10-14). The alpha and beta chains form an alternating ring which encloses part of the gamma chain. F(1) is attached to F(0) by a central stalk formed by the gamma and epsilon chains, while a peripheral stalk is formed by the delta and b chains.</text>
</comment>
<comment type="subcellular location">
    <subcellularLocation>
        <location evidence="1">Cell inner membrane</location>
        <topology evidence="1">Multi-pass membrane protein</topology>
    </subcellularLocation>
</comment>
<comment type="similarity">
    <text evidence="1">Belongs to the ATPase C chain family.</text>
</comment>
<proteinExistence type="inferred from homology"/>
<name>ATPL_ACIFI</name>
<evidence type="ECO:0000255" key="1">
    <source>
        <dbReference type="HAMAP-Rule" id="MF_01396"/>
    </source>
</evidence>
<gene>
    <name evidence="1" type="primary">atpE</name>
</gene>